<feature type="signal peptide" evidence="1">
    <location>
        <begin position="1"/>
        <end position="21"/>
    </location>
</feature>
<feature type="chain" id="PRO_0000013952" description="Uncharacterized protein HI_0149">
    <location>
        <begin position="22"/>
        <end position="63"/>
    </location>
</feature>
<gene>
    <name type="ordered locus">HI_0149</name>
</gene>
<proteinExistence type="inferred from homology"/>
<dbReference type="EMBL" id="L42023">
    <property type="protein sequence ID" value="AAC21830.1"/>
    <property type="molecule type" value="Genomic_DNA"/>
</dbReference>
<dbReference type="PIR" id="G64002">
    <property type="entry name" value="G64002"/>
</dbReference>
<dbReference type="SMR" id="P43953"/>
<dbReference type="STRING" id="71421.HI_0149"/>
<dbReference type="EnsemblBacteria" id="AAC21830">
    <property type="protein sequence ID" value="AAC21830"/>
    <property type="gene ID" value="HI_0149"/>
</dbReference>
<dbReference type="KEGG" id="hin:HI_0149"/>
<dbReference type="eggNOG" id="COG2020">
    <property type="taxonomic scope" value="Bacteria"/>
</dbReference>
<dbReference type="HOGENOM" id="CLU_065200_8_0_6"/>
<dbReference type="Proteomes" id="UP000000579">
    <property type="component" value="Chromosome"/>
</dbReference>
<dbReference type="Gene3D" id="1.20.120.1630">
    <property type="match status" value="1"/>
</dbReference>
<organism>
    <name type="scientific">Haemophilus influenzae (strain ATCC 51907 / DSM 11121 / KW20 / Rd)</name>
    <dbReference type="NCBI Taxonomy" id="71421"/>
    <lineage>
        <taxon>Bacteria</taxon>
        <taxon>Pseudomonadati</taxon>
        <taxon>Pseudomonadota</taxon>
        <taxon>Gammaproteobacteria</taxon>
        <taxon>Pasteurellales</taxon>
        <taxon>Pasteurellaceae</taxon>
        <taxon>Haemophilus</taxon>
    </lineage>
</organism>
<protein>
    <recommendedName>
        <fullName>Uncharacterized protein HI_0149</fullName>
    </recommendedName>
</protein>
<accession>P43953</accession>
<evidence type="ECO:0000255" key="1"/>
<keyword id="KW-1185">Reference proteome</keyword>
<keyword id="KW-0732">Signal</keyword>
<reference key="1">
    <citation type="journal article" date="1995" name="Science">
        <title>Whole-genome random sequencing and assembly of Haemophilus influenzae Rd.</title>
        <authorList>
            <person name="Fleischmann R.D."/>
            <person name="Adams M.D."/>
            <person name="White O."/>
            <person name="Clayton R.A."/>
            <person name="Kirkness E.F."/>
            <person name="Kerlavage A.R."/>
            <person name="Bult C.J."/>
            <person name="Tomb J.-F."/>
            <person name="Dougherty B.A."/>
            <person name="Merrick J.M."/>
            <person name="McKenney K."/>
            <person name="Sutton G.G."/>
            <person name="FitzHugh W."/>
            <person name="Fields C.A."/>
            <person name="Gocayne J.D."/>
            <person name="Scott J.D."/>
            <person name="Shirley R."/>
            <person name="Liu L.-I."/>
            <person name="Glodek A."/>
            <person name="Kelley J.M."/>
            <person name="Weidman J.F."/>
            <person name="Phillips C.A."/>
            <person name="Spriggs T."/>
            <person name="Hedblom E."/>
            <person name="Cotton M.D."/>
            <person name="Utterback T.R."/>
            <person name="Hanna M.C."/>
            <person name="Nguyen D.T."/>
            <person name="Saudek D.M."/>
            <person name="Brandon R.C."/>
            <person name="Fine L.D."/>
            <person name="Fritchman J.L."/>
            <person name="Fuhrmann J.L."/>
            <person name="Geoghagen N.S.M."/>
            <person name="Gnehm C.L."/>
            <person name="McDonald L.A."/>
            <person name="Small K.V."/>
            <person name="Fraser C.M."/>
            <person name="Smith H.O."/>
            <person name="Venter J.C."/>
        </authorList>
    </citation>
    <scope>NUCLEOTIDE SEQUENCE [LARGE SCALE GENOMIC DNA]</scope>
    <source>
        <strain>ATCC 51907 / DSM 11121 / KW20 / Rd</strain>
    </source>
</reference>
<sequence length="63" mass="7693">MYLSLLLILLAWTLWLGNSLAWLGVIIFILVINQFQIAREETYLESKFGDEYRRYKQKVRRWL</sequence>
<name>Y149_HAEIN</name>